<dbReference type="EMBL" id="BC118440">
    <property type="protein sequence ID" value="AAI18441.1"/>
    <property type="molecule type" value="mRNA"/>
</dbReference>
<dbReference type="RefSeq" id="NP_001069739.1">
    <property type="nucleotide sequence ID" value="NM_001076271.1"/>
</dbReference>
<dbReference type="SMR" id="P81623"/>
<dbReference type="FunCoup" id="P81623">
    <property type="interactions" value="2385"/>
</dbReference>
<dbReference type="STRING" id="9913.ENSBTAP00000008754"/>
<dbReference type="PaxDb" id="9913-ENSBTAP00000008754"/>
<dbReference type="PeptideAtlas" id="P81623"/>
<dbReference type="Ensembl" id="ENSBTAT00000008754.4">
    <property type="protein sequence ID" value="ENSBTAP00000008754.3"/>
    <property type="gene ID" value="ENSBTAG00000006665.5"/>
</dbReference>
<dbReference type="GeneID" id="613357"/>
<dbReference type="KEGG" id="bta:613357"/>
<dbReference type="CTD" id="10961"/>
<dbReference type="VEuPathDB" id="HostDB:ENSBTAG00000006665"/>
<dbReference type="VGNC" id="VGNC:28596">
    <property type="gene designation" value="ERP29"/>
</dbReference>
<dbReference type="eggNOG" id="ENOG502QSHC">
    <property type="taxonomic scope" value="Eukaryota"/>
</dbReference>
<dbReference type="GeneTree" id="ENSGT00390000018566"/>
<dbReference type="HOGENOM" id="CLU_061309_1_0_1"/>
<dbReference type="InParanoid" id="P81623"/>
<dbReference type="OMA" id="QMTWISR"/>
<dbReference type="OrthoDB" id="417262at2759"/>
<dbReference type="TreeFam" id="TF324701"/>
<dbReference type="Proteomes" id="UP000009136">
    <property type="component" value="Chromosome 17"/>
</dbReference>
<dbReference type="Bgee" id="ENSBTAG00000006665">
    <property type="expression patterns" value="Expressed in corpus epididymis and 109 other cell types or tissues"/>
</dbReference>
<dbReference type="GO" id="GO:0009986">
    <property type="term" value="C:cell surface"/>
    <property type="evidence" value="ECO:0007669"/>
    <property type="project" value="Ensembl"/>
</dbReference>
<dbReference type="GO" id="GO:0005783">
    <property type="term" value="C:endoplasmic reticulum"/>
    <property type="evidence" value="ECO:0000318"/>
    <property type="project" value="GO_Central"/>
</dbReference>
<dbReference type="GO" id="GO:0005788">
    <property type="term" value="C:endoplasmic reticulum lumen"/>
    <property type="evidence" value="ECO:0007669"/>
    <property type="project" value="UniProtKB-SubCell"/>
</dbReference>
<dbReference type="GO" id="GO:0042470">
    <property type="term" value="C:melanosome"/>
    <property type="evidence" value="ECO:0007669"/>
    <property type="project" value="UniProtKB-SubCell"/>
</dbReference>
<dbReference type="GO" id="GO:0010629">
    <property type="term" value="P:negative regulation of gene expression"/>
    <property type="evidence" value="ECO:0007669"/>
    <property type="project" value="Ensembl"/>
</dbReference>
<dbReference type="GO" id="GO:0050709">
    <property type="term" value="P:negative regulation of protein secretion"/>
    <property type="evidence" value="ECO:0007669"/>
    <property type="project" value="Ensembl"/>
</dbReference>
<dbReference type="GO" id="GO:0010628">
    <property type="term" value="P:positive regulation of gene expression"/>
    <property type="evidence" value="ECO:0007669"/>
    <property type="project" value="Ensembl"/>
</dbReference>
<dbReference type="GO" id="GO:0043410">
    <property type="term" value="P:positive regulation of MAPK cascade"/>
    <property type="evidence" value="ECO:0007669"/>
    <property type="project" value="Ensembl"/>
</dbReference>
<dbReference type="GO" id="GO:0009306">
    <property type="term" value="P:protein secretion"/>
    <property type="evidence" value="ECO:0007669"/>
    <property type="project" value="InterPro"/>
</dbReference>
<dbReference type="GO" id="GO:1902235">
    <property type="term" value="P:regulation of endoplasmic reticulum stress-induced intrinsic apoptotic signaling pathway"/>
    <property type="evidence" value="ECO:0007669"/>
    <property type="project" value="Ensembl"/>
</dbReference>
<dbReference type="CDD" id="cd00238">
    <property type="entry name" value="ERp29c"/>
    <property type="match status" value="1"/>
</dbReference>
<dbReference type="CDD" id="cd03007">
    <property type="entry name" value="PDI_a_ERp29_N"/>
    <property type="match status" value="1"/>
</dbReference>
<dbReference type="FunFam" id="1.20.1150.12:FF:000001">
    <property type="entry name" value="Endoplasmic reticulum resident protein 29"/>
    <property type="match status" value="1"/>
</dbReference>
<dbReference type="FunFam" id="3.40.30.10:FF:000133">
    <property type="entry name" value="Endoplasmic reticulum resident protein 29"/>
    <property type="match status" value="1"/>
</dbReference>
<dbReference type="Gene3D" id="1.20.1150.12">
    <property type="entry name" value="Endoplasmic reticulum resident protein 29, C-terminal domain"/>
    <property type="match status" value="1"/>
</dbReference>
<dbReference type="Gene3D" id="3.40.30.10">
    <property type="entry name" value="Glutaredoxin"/>
    <property type="match status" value="1"/>
</dbReference>
<dbReference type="InterPro" id="IPR016855">
    <property type="entry name" value="ERp29"/>
</dbReference>
<dbReference type="InterPro" id="IPR011679">
    <property type="entry name" value="ERp29_C"/>
</dbReference>
<dbReference type="InterPro" id="IPR036356">
    <property type="entry name" value="ERp29_C_sf"/>
</dbReference>
<dbReference type="InterPro" id="IPR012883">
    <property type="entry name" value="ERp29_N"/>
</dbReference>
<dbReference type="InterPro" id="IPR036249">
    <property type="entry name" value="Thioredoxin-like_sf"/>
</dbReference>
<dbReference type="PANTHER" id="PTHR12211">
    <property type="entry name" value="ENDOPLASMIC RETICULUM PROTEIN ERP29"/>
    <property type="match status" value="1"/>
</dbReference>
<dbReference type="PANTHER" id="PTHR12211:SF0">
    <property type="entry name" value="ENDOPLASMIC RETICULUM RESIDENT PROTEIN 29"/>
    <property type="match status" value="1"/>
</dbReference>
<dbReference type="Pfam" id="PF07749">
    <property type="entry name" value="ERp29"/>
    <property type="match status" value="1"/>
</dbReference>
<dbReference type="Pfam" id="PF07912">
    <property type="entry name" value="ERp29_N"/>
    <property type="match status" value="1"/>
</dbReference>
<dbReference type="PIRSF" id="PIRSF027352">
    <property type="entry name" value="ER_p29"/>
    <property type="match status" value="1"/>
</dbReference>
<dbReference type="SUPFAM" id="SSF47933">
    <property type="entry name" value="ERP29 C domain-like"/>
    <property type="match status" value="1"/>
</dbReference>
<dbReference type="SUPFAM" id="SSF52833">
    <property type="entry name" value="Thioredoxin-like"/>
    <property type="match status" value="1"/>
</dbReference>
<dbReference type="PROSITE" id="PS00014">
    <property type="entry name" value="ER_TARGET"/>
    <property type="match status" value="1"/>
</dbReference>
<keyword id="KW-0903">Direct protein sequencing</keyword>
<keyword id="KW-0256">Endoplasmic reticulum</keyword>
<keyword id="KW-0597">Phosphoprotein</keyword>
<keyword id="KW-1185">Reference proteome</keyword>
<keyword id="KW-0732">Signal</keyword>
<sequence length="258" mass="28806">MAAAIPRAASLSPLFPLLFLLSAPQDSSGLHTKGALPLDTITFYKVIPKSKFVLVKFDTQYPYGEKQDEFKRLAENSASSDDLLVAEVGISDYGDKLNMELSEKYKLDKENYPIFYLFQDGDFENPVLYSGAVKVGAIQRWLKGHGIYLGMPGCLPAYDTLAGEFIRASGVEARQSLLKQGQDNLASVKETDKKWAEQYLKIMGKILDQGEDFPASEMTRITKLIEKNKMSDGKKEELQKSLNILTAFQKKGGEKEEL</sequence>
<comment type="function">
    <text evidence="1">Does not seem to be a disulfide isomerase. Plays an important role in the processing of secretory proteins within the ER (By similarity).</text>
</comment>
<comment type="subunit">
    <text evidence="1">Homodimer. Part of a large chaperone multiprotein complex comprising DNAJB11, HSP90B1, HSPA5, HYOU, PDIA2, PDIA4, PDIA6, PPIB, SDF2L1, UGGT1 and very small amounts of ERP29, but not, or at very low levels, CALR nor CANX (By similarity).</text>
</comment>
<comment type="subcellular location">
    <subcellularLocation>
        <location>Endoplasmic reticulum lumen</location>
    </subcellularLocation>
    <subcellularLocation>
        <location evidence="1">Melanosome</location>
    </subcellularLocation>
</comment>
<protein>
    <recommendedName>
        <fullName>Endoplasmic reticulum resident protein 29</fullName>
        <shortName>ERp29</shortName>
    </recommendedName>
</protein>
<accession>P81623</accession>
<accession>Q17QC3</accession>
<evidence type="ECO:0000250" key="1"/>
<evidence type="ECO:0000250" key="2">
    <source>
        <dbReference type="UniProtKB" id="P30040"/>
    </source>
</evidence>
<evidence type="ECO:0000255" key="3">
    <source>
        <dbReference type="PROSITE-ProRule" id="PRU10138"/>
    </source>
</evidence>
<evidence type="ECO:0000269" key="4">
    <source>
    </source>
</evidence>
<evidence type="ECO:0000305" key="5"/>
<name>ERP29_BOVIN</name>
<proteinExistence type="evidence at protein level"/>
<gene>
    <name type="primary">ERP29</name>
</gene>
<feature type="signal peptide" evidence="4">
    <location>
        <begin position="1"/>
        <end position="29"/>
    </location>
</feature>
<feature type="chain" id="PRO_0000087030" description="Endoplasmic reticulum resident protein 29">
    <location>
        <begin position="30"/>
        <end position="258"/>
    </location>
</feature>
<feature type="short sequence motif" description="Prevents secretion from ER" evidence="3">
    <location>
        <begin position="255"/>
        <end position="258"/>
    </location>
</feature>
<feature type="modified residue" description="Phosphotyrosine; by PKDCC" evidence="2">
    <location>
        <position position="61"/>
    </location>
</feature>
<feature type="modified residue" description="Phosphotyrosine; by PKDCC" evidence="2">
    <location>
        <position position="63"/>
    </location>
</feature>
<feature type="sequence conflict" description="In Ref. 2; AA sequence." evidence="5" ref="2">
    <original>I</original>
    <variation>V</variation>
    <location>
        <position position="41"/>
    </location>
</feature>
<feature type="sequence conflict" description="In Ref. 2; AA sequence." evidence="5" ref="2">
    <original>D</original>
    <variation>H</variation>
    <location>
        <position position="212"/>
    </location>
</feature>
<reference key="1">
    <citation type="submission" date="2006-06" db="EMBL/GenBank/DDBJ databases">
        <authorList>
            <consortium name="NIH - Mammalian Gene Collection (MGC) project"/>
        </authorList>
    </citation>
    <scope>NUCLEOTIDE SEQUENCE [LARGE SCALE MRNA]</scope>
    <source>
        <strain>Hereford</strain>
        <tissue>Fetal pons</tissue>
    </source>
</reference>
<reference key="2">
    <citation type="journal article" date="1998" name="Eur. J. Biochem.">
        <title>ERp28, a human endoplasmic-reticulum-lumenal protein, is a member of the protein disulfide isomerase family but lacks a CXXC thioredoxin-box motif.</title>
        <authorList>
            <person name="Ferrari D.M."/>
            <person name="van Nguyen P."/>
            <person name="Kratzin H.D."/>
            <person name="Soeling H.D."/>
        </authorList>
    </citation>
    <scope>PROTEIN SEQUENCE OF 30-50 AND 204-213</scope>
    <source>
        <tissue>Liver</tissue>
    </source>
</reference>
<organism>
    <name type="scientific">Bos taurus</name>
    <name type="common">Bovine</name>
    <dbReference type="NCBI Taxonomy" id="9913"/>
    <lineage>
        <taxon>Eukaryota</taxon>
        <taxon>Metazoa</taxon>
        <taxon>Chordata</taxon>
        <taxon>Craniata</taxon>
        <taxon>Vertebrata</taxon>
        <taxon>Euteleostomi</taxon>
        <taxon>Mammalia</taxon>
        <taxon>Eutheria</taxon>
        <taxon>Laurasiatheria</taxon>
        <taxon>Artiodactyla</taxon>
        <taxon>Ruminantia</taxon>
        <taxon>Pecora</taxon>
        <taxon>Bovidae</taxon>
        <taxon>Bovinae</taxon>
        <taxon>Bos</taxon>
    </lineage>
</organism>